<reference key="1">
    <citation type="journal article" date="1997" name="J. Biol. Chem.">
        <title>Characterization of RAC3, a novel member of the Rho family.</title>
        <authorList>
            <person name="Haataja L."/>
            <person name="Groffen J."/>
            <person name="Heisterkamp N."/>
        </authorList>
    </citation>
    <scope>NUCLEOTIDE SEQUENCE [MRNA]</scope>
</reference>
<reference key="2">
    <citation type="submission" date="2002-04" db="EMBL/GenBank/DDBJ databases">
        <title>cDNA clones of human proteins involved in signal transduction sequenced by the Guthrie cDNA resource center (www.cdna.org).</title>
        <authorList>
            <person name="Puhl H.L. III"/>
            <person name="Ikeda S.R."/>
            <person name="Aronstam R.S."/>
        </authorList>
    </citation>
    <scope>NUCLEOTIDE SEQUENCE [LARGE SCALE MRNA]</scope>
</reference>
<reference key="3">
    <citation type="submission" date="2004-10" db="EMBL/GenBank/DDBJ databases">
        <title>Cloning of human full-length CDSs in BD Creator(TM) system donor vector.</title>
        <authorList>
            <person name="Kalnine N."/>
            <person name="Chen X."/>
            <person name="Rolfs A."/>
            <person name="Halleck A."/>
            <person name="Hines L."/>
            <person name="Eisenstein S."/>
            <person name="Koundinya M."/>
            <person name="Raphael J."/>
            <person name="Moreira D."/>
            <person name="Kelley T."/>
            <person name="LaBaer J."/>
            <person name="Lin Y."/>
            <person name="Phelan M."/>
            <person name="Farmer A."/>
        </authorList>
    </citation>
    <scope>NUCLEOTIDE SEQUENCE [LARGE SCALE MRNA]</scope>
</reference>
<reference key="4">
    <citation type="journal article" date="2004" name="Genome Res.">
        <title>The status, quality, and expansion of the NIH full-length cDNA project: the Mammalian Gene Collection (MGC).</title>
        <authorList>
            <consortium name="The MGC Project Team"/>
        </authorList>
    </citation>
    <scope>NUCLEOTIDE SEQUENCE [LARGE SCALE MRNA]</scope>
    <source>
        <tissue>Brain</tissue>
    </source>
</reference>
<reference key="5">
    <citation type="journal article" date="1998" name="Int. J. Mol. Med.">
        <title>Identification of a novel Rac3-interacting protein C1D.</title>
        <authorList>
            <person name="Haataja L."/>
            <person name="Groffen J."/>
            <person name="Heisterkamp N."/>
        </authorList>
    </citation>
    <scope>INTERACTION WITH C1D</scope>
</reference>
<reference key="6">
    <citation type="journal article" date="2002" name="Int. J. Mol. Med.">
        <title>Interaction of the small GTPase Rac3 with NRBP, a protein with a kinase-homology domain.</title>
        <authorList>
            <person name="De Langhe S."/>
            <person name="Haataja L."/>
            <person name="Senadheera D."/>
            <person name="Groffen J."/>
            <person name="Heisterkamp N."/>
        </authorList>
    </citation>
    <scope>FUNCTION</scope>
    <scope>SUBCELLULAR LOCATION</scope>
    <scope>INTERACTION WITH NRBP</scope>
</reference>
<reference key="7">
    <citation type="journal article" date="2002" name="J. Biol. Chem.">
        <title>The small GTPase Rac3 interacts with the integrin-binding protein CIB and promotes integrin alpha(IIb)beta(3)-mediated adhesion and spreading.</title>
        <authorList>
            <person name="Haataja L."/>
            <person name="Kaartinen V."/>
            <person name="Groffen J."/>
            <person name="Heisterkamp N."/>
        </authorList>
    </citation>
    <scope>FUNCTION</scope>
    <scope>INTERACTION WITH CIB1</scope>
    <scope>SUBCELLULAR LOCATION</scope>
</reference>
<reference key="8">
    <citation type="journal article" date="2006" name="Neuron">
        <title>The Rac activator DOCK7 regulates neuronal polarity through local phosphorylation of stathmin/Op18.</title>
        <authorList>
            <person name="Watabe-Uchida M."/>
            <person name="John K.A."/>
            <person name="Janas J.A."/>
            <person name="Newey S.E."/>
            <person name="Van Aelst L."/>
        </authorList>
    </citation>
    <scope>INTERACTION WITH DOCK7</scope>
    <scope>ACTIVITY REGULATION</scope>
    <scope>CATALYTIC ACTIVITY</scope>
</reference>
<reference key="9">
    <citation type="journal article" date="2011" name="BMC Syst. Biol.">
        <title>Initial characterization of the human central proteome.</title>
        <authorList>
            <person name="Burkard T.R."/>
            <person name="Planyavsky M."/>
            <person name="Kaupe I."/>
            <person name="Breitwieser F.P."/>
            <person name="Buerckstuemmer T."/>
            <person name="Bennett K.L."/>
            <person name="Superti-Furga G."/>
            <person name="Colinge J."/>
        </authorList>
    </citation>
    <scope>IDENTIFICATION BY MASS SPECTROMETRY [LARGE SCALE ANALYSIS]</scope>
</reference>
<reference key="10">
    <citation type="journal article" date="2013" name="Nat. Struct. Mol. Biol.">
        <title>A bacterial toxin catalyzing tyrosine glycosylation of Rho and deamidation of Gq and Gi proteins.</title>
        <authorList>
            <person name="Jank T."/>
            <person name="Bogdanovic X."/>
            <person name="Wirth C."/>
            <person name="Haaf E."/>
            <person name="Spoerner M."/>
            <person name="Boehmer K.E."/>
            <person name="Steinemann M."/>
            <person name="Orth J.H."/>
            <person name="Kalbitzer H.R."/>
            <person name="Warscheid B."/>
            <person name="Hunte C."/>
            <person name="Aktories K."/>
        </authorList>
    </citation>
    <scope>GLYCOSYLATION AT TYR-32 (MICROBIAL INFECTION)</scope>
</reference>
<reference key="11">
    <citation type="journal article" date="2014" name="Mol. Cancer">
        <title>F-box protein complex FBXL19 regulates TGFbeta1-induced E-cadherin down-regulation by mediating Rac3 ubiquitination and degradation.</title>
        <authorList>
            <person name="Dong S."/>
            <person name="Zhao J."/>
            <person name="Wei J."/>
            <person name="Bowser R.K."/>
            <person name="Khoo A."/>
            <person name="Liu Z."/>
            <person name="Luketich J.D."/>
            <person name="Pennathur A."/>
            <person name="Ma H."/>
            <person name="Zhao Y."/>
        </authorList>
    </citation>
    <scope>FUNCTION</scope>
    <scope>UBIQUITINATION AT LYS-166</scope>
    <scope>MUTAGENESIS OF LYS-166</scope>
</reference>
<reference key="12">
    <citation type="journal article" date="2018" name="Am. J. Hum. Genet.">
        <title>WNT signaling perturbations underlie the genetic heterogeneity of Robinow syndrome.</title>
        <authorList>
            <consortium name="Baylor-Hopkins Center for Mendelian Genomics"/>
            <person name="White J.J."/>
            <person name="Mazzeu J.F."/>
            <person name="Coban-Akdemir Z."/>
            <person name="Bayram Y."/>
            <person name="Bahrambeigi V."/>
            <person name="Hoischen A."/>
            <person name="van Bon B.W.M."/>
            <person name="Gezdirici A."/>
            <person name="Gulec E.Y."/>
            <person name="Ramond F."/>
            <person name="Touraine R."/>
            <person name="Thevenon J."/>
            <person name="Shinawi M."/>
            <person name="Beaver E."/>
            <person name="Heeley J."/>
            <person name="Hoover-Fong J."/>
            <person name="Durmaz C.D."/>
            <person name="Karabulut H.G."/>
            <person name="Marzioglu-Ozdemir E."/>
            <person name="Cayir A."/>
            <person name="Duz M.B."/>
            <person name="Seven M."/>
            <person name="Price S."/>
            <person name="Ferreira B.M."/>
            <person name="Vianna-Morgante A.M."/>
            <person name="Ellard S."/>
            <person name="Parrish A."/>
            <person name="Stals K."/>
            <person name="Flores-Daboub J."/>
            <person name="Jhangiani S.N."/>
            <person name="Gibbs R.A."/>
            <person name="Brunner H.G."/>
            <person name="Sutton V.R."/>
            <person name="Lupski J.R."/>
            <person name="Carvalho C.M.B."/>
        </authorList>
    </citation>
    <scope>INVOLVEMENT IN NEDBAF</scope>
    <scope>VARIANT NEDBAF GLY-59</scope>
</reference>
<reference key="13">
    <citation type="journal article" date="2019" name="Genet. Med.">
        <title>De novo missense variants in RAC3 cause a novel neurodevelopmental syndrome.</title>
        <authorList>
            <person name="Costain G."/>
            <person name="Callewaert B."/>
            <person name="Gabriel H."/>
            <person name="Tan T.Y."/>
            <person name="Walker S."/>
            <person name="Christodoulou J."/>
            <person name="Lazar T."/>
            <person name="Menten B."/>
            <person name="Orkin J."/>
            <person name="Sadedin S."/>
            <person name="Snell M."/>
            <person name="Vanlander A."/>
            <person name="Vergult S."/>
            <person name="White S.M."/>
            <person name="Scherer S.W."/>
            <person name="Hayeems R.Z."/>
            <person name="Blaser S."/>
            <person name="Wodak S.J."/>
            <person name="Chitayat D."/>
            <person name="Marshall C.R."/>
            <person name="Meyn M.S."/>
        </authorList>
    </citation>
    <scope>VARIANTS NEDBAF LEU-29; LEU-61 AND LYS-62</scope>
</reference>
<evidence type="ECO:0000250" key="1"/>
<evidence type="ECO:0000255" key="2"/>
<evidence type="ECO:0000269" key="3">
    <source>
    </source>
</evidence>
<evidence type="ECO:0000269" key="4">
    <source>
    </source>
</evidence>
<evidence type="ECO:0000269" key="5">
    <source>
    </source>
</evidence>
<evidence type="ECO:0000269" key="6">
    <source>
    </source>
</evidence>
<evidence type="ECO:0000269" key="7">
    <source>
    </source>
</evidence>
<evidence type="ECO:0000269" key="8">
    <source>
    </source>
</evidence>
<evidence type="ECO:0000269" key="9">
    <source>
    </source>
</evidence>
<evidence type="ECO:0000269" key="10">
    <source>
    </source>
</evidence>
<evidence type="ECO:0000305" key="11"/>
<evidence type="ECO:0000312" key="12">
    <source>
        <dbReference type="HGNC" id="HGNC:9803"/>
    </source>
</evidence>
<evidence type="ECO:0007829" key="13">
    <source>
        <dbReference type="PDB" id="2C2H"/>
    </source>
</evidence>
<evidence type="ECO:0007829" key="14">
    <source>
        <dbReference type="PDB" id="2QME"/>
    </source>
</evidence>
<feature type="chain" id="PRO_0000198889" description="Ras-related C3 botulinum toxin substrate 3">
    <location>
        <begin position="1"/>
        <end position="189"/>
    </location>
</feature>
<feature type="propeptide" id="PRO_0000281240" description="Removed in mature form" evidence="1">
    <location>
        <begin position="190"/>
        <end position="192"/>
    </location>
</feature>
<feature type="short sequence motif" description="Effector region" evidence="2">
    <location>
        <begin position="32"/>
        <end position="40"/>
    </location>
</feature>
<feature type="binding site" evidence="1">
    <location>
        <begin position="10"/>
        <end position="17"/>
    </location>
    <ligand>
        <name>GTP</name>
        <dbReference type="ChEBI" id="CHEBI:37565"/>
    </ligand>
</feature>
<feature type="binding site" evidence="1">
    <location>
        <begin position="57"/>
        <end position="61"/>
    </location>
    <ligand>
        <name>GTP</name>
        <dbReference type="ChEBI" id="CHEBI:37565"/>
    </ligand>
</feature>
<feature type="binding site" evidence="1">
    <location>
        <begin position="115"/>
        <end position="118"/>
    </location>
    <ligand>
        <name>GTP</name>
        <dbReference type="ChEBI" id="CHEBI:37565"/>
    </ligand>
</feature>
<feature type="modified residue" description="Cysteine methyl ester" evidence="1">
    <location>
        <position position="189"/>
    </location>
</feature>
<feature type="lipid moiety-binding region" description="S-geranylgeranyl cysteine" evidence="1">
    <location>
        <position position="189"/>
    </location>
</feature>
<feature type="glycosylation site" description="O-linked (GlcNAc) tyrosine; by Photorhabdus PAU_02230" evidence="6">
    <location>
        <position position="32"/>
    </location>
</feature>
<feature type="cross-link" description="Glycyl lysine isopeptide (Lys-Gly) (interchain with G-Cter in ubiquitin)" evidence="7">
    <location>
        <position position="166"/>
    </location>
</feature>
<feature type="sequence variant" id="VAR_083040" description="In NEDBAF; dbSNP:rs1568018697." evidence="9">
    <original>P</original>
    <variation>L</variation>
    <location>
        <position position="29"/>
    </location>
</feature>
<feature type="sequence variant" id="VAR_083245" description="In NEDBAF; dbSNP:rs1379395211." evidence="8">
    <original>A</original>
    <variation>G</variation>
    <location>
        <position position="59"/>
    </location>
</feature>
<feature type="sequence variant" id="VAR_083041" description="In NEDBAF; dbSNP:rs1568018920." evidence="9">
    <original>Q</original>
    <variation>L</variation>
    <location>
        <position position="61"/>
    </location>
</feature>
<feature type="sequence variant" id="VAR_083042" description="In NEDBAF; dbSNP:rs1064797229." evidence="9">
    <original>E</original>
    <variation>K</variation>
    <location>
        <position position="62"/>
    </location>
</feature>
<feature type="mutagenesis site" description="Reduced FBXL19-mediated ubiquitination and subsequent degradation." evidence="7">
    <original>K</original>
    <variation>R</variation>
    <location>
        <position position="166"/>
    </location>
</feature>
<feature type="strand" evidence="14">
    <location>
        <begin position="2"/>
        <end position="10"/>
    </location>
</feature>
<feature type="helix" evidence="14">
    <location>
        <begin position="16"/>
        <end position="25"/>
    </location>
</feature>
<feature type="strand" evidence="14">
    <location>
        <begin position="36"/>
        <end position="46"/>
    </location>
</feature>
<feature type="strand" evidence="14">
    <location>
        <begin position="49"/>
        <end position="58"/>
    </location>
</feature>
<feature type="helix" evidence="14">
    <location>
        <begin position="62"/>
        <end position="64"/>
    </location>
</feature>
<feature type="turn" evidence="14">
    <location>
        <begin position="65"/>
        <end position="67"/>
    </location>
</feature>
<feature type="helix" evidence="14">
    <location>
        <begin position="68"/>
        <end position="71"/>
    </location>
</feature>
<feature type="strand" evidence="14">
    <location>
        <begin position="76"/>
        <end position="83"/>
    </location>
</feature>
<feature type="helix" evidence="14">
    <location>
        <begin position="87"/>
        <end position="95"/>
    </location>
</feature>
<feature type="helix" evidence="14">
    <location>
        <begin position="97"/>
        <end position="104"/>
    </location>
</feature>
<feature type="strand" evidence="13">
    <location>
        <begin position="105"/>
        <end position="108"/>
    </location>
</feature>
<feature type="strand" evidence="14">
    <location>
        <begin position="110"/>
        <end position="115"/>
    </location>
</feature>
<feature type="helix" evidence="14">
    <location>
        <begin position="117"/>
        <end position="119"/>
    </location>
</feature>
<feature type="helix" evidence="14">
    <location>
        <begin position="123"/>
        <end position="130"/>
    </location>
</feature>
<feature type="turn" evidence="14">
    <location>
        <begin position="131"/>
        <end position="133"/>
    </location>
</feature>
<feature type="helix" evidence="14">
    <location>
        <begin position="139"/>
        <end position="148"/>
    </location>
</feature>
<feature type="strand" evidence="14">
    <location>
        <begin position="152"/>
        <end position="156"/>
    </location>
</feature>
<feature type="turn" evidence="14">
    <location>
        <begin position="159"/>
        <end position="161"/>
    </location>
</feature>
<feature type="helix" evidence="14">
    <location>
        <begin position="165"/>
        <end position="177"/>
    </location>
</feature>
<sequence>MQAIKCVVVGDGAVGKTCLLISYTTNAFPGEYIPTVFDNYSANVMVDGKPVNLGLWDTAGQEDYDRLRPLSYPQTDVFLICFSLVSPASFENVRAKWYPEVRHHCPHTPILLVGTKLDLRDDKDTIERLRDKKLAPITYPQGLAMAREIGSVKYLECSALTQRGLKTVFDEAIRAVLCPPPVKKPGKKCTVF</sequence>
<name>RAC3_HUMAN</name>
<protein>
    <recommendedName>
        <fullName evidence="11">Ras-related C3 botulinum toxin substrate 3</fullName>
        <ecNumber evidence="5">3.6.5.2</ecNumber>
    </recommendedName>
    <alternativeName>
        <fullName>p21-Rac3</fullName>
    </alternativeName>
</protein>
<gene>
    <name evidence="12" type="primary">RAC3</name>
</gene>
<dbReference type="EC" id="3.6.5.2" evidence="5"/>
<dbReference type="EMBL" id="AF008591">
    <property type="protein sequence ID" value="AAC51667.1"/>
    <property type="molecule type" value="mRNA"/>
</dbReference>
<dbReference type="EMBL" id="AF498966">
    <property type="protein sequence ID" value="AAM21113.1"/>
    <property type="molecule type" value="mRNA"/>
</dbReference>
<dbReference type="EMBL" id="BT019443">
    <property type="protein sequence ID" value="AAV38250.1"/>
    <property type="molecule type" value="mRNA"/>
</dbReference>
<dbReference type="EMBL" id="BC009605">
    <property type="protein sequence ID" value="AAH09605.1"/>
    <property type="molecule type" value="mRNA"/>
</dbReference>
<dbReference type="EMBL" id="BC015197">
    <property type="protein sequence ID" value="AAH15197.1"/>
    <property type="molecule type" value="mRNA"/>
</dbReference>
<dbReference type="CCDS" id="CCDS11798.1"/>
<dbReference type="RefSeq" id="NP_005043.1">
    <property type="nucleotide sequence ID" value="NM_005052.3"/>
</dbReference>
<dbReference type="PDB" id="2C2H">
    <property type="method" value="X-ray"/>
    <property type="resolution" value="1.85 A"/>
    <property type="chains" value="A/B=1-192"/>
</dbReference>
<dbReference type="PDB" id="2G0N">
    <property type="method" value="X-ray"/>
    <property type="resolution" value="1.90 A"/>
    <property type="chains" value="A/B=1-177"/>
</dbReference>
<dbReference type="PDB" id="2IC5">
    <property type="method" value="X-ray"/>
    <property type="resolution" value="1.90 A"/>
    <property type="chains" value="A/B=1-178"/>
</dbReference>
<dbReference type="PDB" id="2OV2">
    <property type="method" value="X-ray"/>
    <property type="resolution" value="2.10 A"/>
    <property type="chains" value="A/B/C/D/E/F/G/H=1-177"/>
</dbReference>
<dbReference type="PDB" id="2QME">
    <property type="method" value="X-ray"/>
    <property type="resolution" value="1.75 A"/>
    <property type="chains" value="A=1-177"/>
</dbReference>
<dbReference type="PDB" id="6TM1">
    <property type="method" value="X-ray"/>
    <property type="resolution" value="3.71 A"/>
    <property type="chains" value="A=1-192"/>
</dbReference>
<dbReference type="PDBsum" id="2C2H"/>
<dbReference type="PDBsum" id="2G0N"/>
<dbReference type="PDBsum" id="2IC5"/>
<dbReference type="PDBsum" id="2OV2"/>
<dbReference type="PDBsum" id="2QME"/>
<dbReference type="PDBsum" id="6TM1"/>
<dbReference type="SMR" id="P60763"/>
<dbReference type="BioGRID" id="111819">
    <property type="interactions" value="618"/>
</dbReference>
<dbReference type="ComplexPortal" id="CPX-6135">
    <property type="entry name" value="Phagocyte NADPH oxidase complex, RAC3 variant"/>
</dbReference>
<dbReference type="DIP" id="DIP-33881N"/>
<dbReference type="FunCoup" id="P60763">
    <property type="interactions" value="2128"/>
</dbReference>
<dbReference type="IntAct" id="P60763">
    <property type="interactions" value="47"/>
</dbReference>
<dbReference type="MINT" id="P60763"/>
<dbReference type="STRING" id="9606.ENSP00000304283"/>
<dbReference type="BindingDB" id="P60763"/>
<dbReference type="ChEMBL" id="CHEMBL6087"/>
<dbReference type="GlyCosmos" id="P60763">
    <property type="glycosylation" value="1 site, No reported glycans"/>
</dbReference>
<dbReference type="GlyGen" id="P60763">
    <property type="glycosylation" value="1 site"/>
</dbReference>
<dbReference type="iPTMnet" id="P60763"/>
<dbReference type="PhosphoSitePlus" id="P60763"/>
<dbReference type="SwissPalm" id="P60763"/>
<dbReference type="BioMuta" id="RAC3"/>
<dbReference type="DMDM" id="46397673"/>
<dbReference type="jPOST" id="P60763"/>
<dbReference type="MassIVE" id="P60763"/>
<dbReference type="PaxDb" id="9606-ENSP00000304283"/>
<dbReference type="PeptideAtlas" id="P60763"/>
<dbReference type="ProteomicsDB" id="57225"/>
<dbReference type="Pumba" id="P60763"/>
<dbReference type="TopDownProteomics" id="P60763"/>
<dbReference type="Antibodypedia" id="32958">
    <property type="antibodies" value="100 antibodies from 25 providers"/>
</dbReference>
<dbReference type="DNASU" id="5881"/>
<dbReference type="Ensembl" id="ENST00000306897.9">
    <property type="protein sequence ID" value="ENSP00000304283.4"/>
    <property type="gene ID" value="ENSG00000169750.9"/>
</dbReference>
<dbReference type="GeneID" id="5881"/>
<dbReference type="KEGG" id="hsa:5881"/>
<dbReference type="MANE-Select" id="ENST00000306897.9">
    <property type="protein sequence ID" value="ENSP00000304283.4"/>
    <property type="RefSeq nucleotide sequence ID" value="NM_005052.3"/>
    <property type="RefSeq protein sequence ID" value="NP_005043.1"/>
</dbReference>
<dbReference type="UCSC" id="uc002kdf.4">
    <property type="organism name" value="human"/>
</dbReference>
<dbReference type="AGR" id="HGNC:9803"/>
<dbReference type="CTD" id="5881"/>
<dbReference type="DisGeNET" id="5881"/>
<dbReference type="GeneCards" id="RAC3"/>
<dbReference type="HGNC" id="HGNC:9803">
    <property type="gene designation" value="RAC3"/>
</dbReference>
<dbReference type="HPA" id="ENSG00000169750">
    <property type="expression patterns" value="Tissue enhanced (brain)"/>
</dbReference>
<dbReference type="MalaCards" id="RAC3"/>
<dbReference type="MIM" id="602050">
    <property type="type" value="gene"/>
</dbReference>
<dbReference type="MIM" id="618577">
    <property type="type" value="phenotype"/>
</dbReference>
<dbReference type="neXtProt" id="NX_P60763"/>
<dbReference type="OpenTargets" id="ENSG00000169750"/>
<dbReference type="Orphanet" id="659609">
    <property type="disease" value="Facial dysmorphism-global developmental delay-hypotonia-polymicrogyria syndrome"/>
</dbReference>
<dbReference type="Orphanet" id="528084">
    <property type="disease" value="Non-specific syndromic intellectual disability"/>
</dbReference>
<dbReference type="PharmGKB" id="PA34164"/>
<dbReference type="VEuPathDB" id="HostDB:ENSG00000169750"/>
<dbReference type="eggNOG" id="KOG0393">
    <property type="taxonomic scope" value="Eukaryota"/>
</dbReference>
<dbReference type="GeneTree" id="ENSGT00940000153500"/>
<dbReference type="HOGENOM" id="CLU_041217_21_3_1"/>
<dbReference type="InParanoid" id="P60763"/>
<dbReference type="OMA" id="RRMAPIT"/>
<dbReference type="OrthoDB" id="8830751at2759"/>
<dbReference type="PAN-GO" id="P60763">
    <property type="GO annotations" value="13 GO annotations based on evolutionary models"/>
</dbReference>
<dbReference type="PhylomeDB" id="P60763"/>
<dbReference type="TreeFam" id="TF101109"/>
<dbReference type="BRENDA" id="3.6.5.2">
    <property type="organism ID" value="2681"/>
</dbReference>
<dbReference type="PathwayCommons" id="P60763"/>
<dbReference type="Reactome" id="R-HSA-4086400">
    <property type="pathway name" value="PCP/CE pathway"/>
</dbReference>
<dbReference type="Reactome" id="R-HSA-9013423">
    <property type="pathway name" value="RAC3 GTPase cycle"/>
</dbReference>
<dbReference type="SignaLink" id="P60763"/>
<dbReference type="SIGNOR" id="P60763"/>
<dbReference type="BioGRID-ORCS" id="5881">
    <property type="hits" value="131 hits in 1157 CRISPR screens"/>
</dbReference>
<dbReference type="EvolutionaryTrace" id="P60763"/>
<dbReference type="GeneWiki" id="RAC3"/>
<dbReference type="GenomeRNAi" id="5881"/>
<dbReference type="Pharos" id="P60763">
    <property type="development level" value="Tbio"/>
</dbReference>
<dbReference type="PRO" id="PR:P60763"/>
<dbReference type="Proteomes" id="UP000005640">
    <property type="component" value="Chromosome 17"/>
</dbReference>
<dbReference type="RNAct" id="P60763">
    <property type="molecule type" value="protein"/>
</dbReference>
<dbReference type="Bgee" id="ENSG00000169750">
    <property type="expression patterns" value="Expressed in cortical plate and 101 other cell types or tissues"/>
</dbReference>
<dbReference type="ExpressionAtlas" id="P60763">
    <property type="expression patterns" value="baseline and differential"/>
</dbReference>
<dbReference type="GO" id="GO:0071944">
    <property type="term" value="C:cell periphery"/>
    <property type="evidence" value="ECO:0000314"/>
    <property type="project" value="UniProtKB"/>
</dbReference>
<dbReference type="GO" id="GO:0031410">
    <property type="term" value="C:cytoplasmic vesicle"/>
    <property type="evidence" value="ECO:0000318"/>
    <property type="project" value="GO_Central"/>
</dbReference>
<dbReference type="GO" id="GO:0005856">
    <property type="term" value="C:cytoskeleton"/>
    <property type="evidence" value="ECO:0000318"/>
    <property type="project" value="GO_Central"/>
</dbReference>
<dbReference type="GO" id="GO:0005829">
    <property type="term" value="C:cytosol"/>
    <property type="evidence" value="ECO:0000304"/>
    <property type="project" value="Reactome"/>
</dbReference>
<dbReference type="GO" id="GO:0012505">
    <property type="term" value="C:endomembrane system"/>
    <property type="evidence" value="ECO:0000314"/>
    <property type="project" value="UniProtKB"/>
</dbReference>
<dbReference type="GO" id="GO:0005789">
    <property type="term" value="C:endoplasmic reticulum membrane"/>
    <property type="evidence" value="ECO:0000304"/>
    <property type="project" value="Reactome"/>
</dbReference>
<dbReference type="GO" id="GO:0070062">
    <property type="term" value="C:extracellular exosome"/>
    <property type="evidence" value="ECO:0007005"/>
    <property type="project" value="UniProtKB"/>
</dbReference>
<dbReference type="GO" id="GO:0031941">
    <property type="term" value="C:filamentous actin"/>
    <property type="evidence" value="ECO:0000314"/>
    <property type="project" value="MGI"/>
</dbReference>
<dbReference type="GO" id="GO:0098978">
    <property type="term" value="C:glutamatergic synapse"/>
    <property type="evidence" value="ECO:0000314"/>
    <property type="project" value="SynGO"/>
</dbReference>
<dbReference type="GO" id="GO:0030426">
    <property type="term" value="C:growth cone"/>
    <property type="evidence" value="ECO:0000314"/>
    <property type="project" value="MGI"/>
</dbReference>
<dbReference type="GO" id="GO:0030027">
    <property type="term" value="C:lamellipodium"/>
    <property type="evidence" value="ECO:0007669"/>
    <property type="project" value="UniProtKB-SubCell"/>
</dbReference>
<dbReference type="GO" id="GO:0043020">
    <property type="term" value="C:NADPH oxidase complex"/>
    <property type="evidence" value="ECO:0000303"/>
    <property type="project" value="ComplexPortal"/>
</dbReference>
<dbReference type="GO" id="GO:0043005">
    <property type="term" value="C:neuron projection"/>
    <property type="evidence" value="ECO:0000314"/>
    <property type="project" value="MGI"/>
</dbReference>
<dbReference type="GO" id="GO:0043025">
    <property type="term" value="C:neuronal cell body"/>
    <property type="evidence" value="ECO:0000314"/>
    <property type="project" value="MGI"/>
</dbReference>
<dbReference type="GO" id="GO:0048471">
    <property type="term" value="C:perinuclear region of cytoplasm"/>
    <property type="evidence" value="ECO:0000314"/>
    <property type="project" value="UniProtKB"/>
</dbReference>
<dbReference type="GO" id="GO:0005886">
    <property type="term" value="C:plasma membrane"/>
    <property type="evidence" value="ECO:0000318"/>
    <property type="project" value="GO_Central"/>
</dbReference>
<dbReference type="GO" id="GO:0098794">
    <property type="term" value="C:postsynapse"/>
    <property type="evidence" value="ECO:0007669"/>
    <property type="project" value="Ensembl"/>
</dbReference>
<dbReference type="GO" id="GO:0048306">
    <property type="term" value="F:calcium-dependent protein binding"/>
    <property type="evidence" value="ECO:0000353"/>
    <property type="project" value="UniProtKB"/>
</dbReference>
<dbReference type="GO" id="GO:0003925">
    <property type="term" value="F:G protein activity"/>
    <property type="evidence" value="ECO:0007669"/>
    <property type="project" value="UniProtKB-EC"/>
</dbReference>
<dbReference type="GO" id="GO:0005525">
    <property type="term" value="F:GTP binding"/>
    <property type="evidence" value="ECO:0000318"/>
    <property type="project" value="GO_Central"/>
</dbReference>
<dbReference type="GO" id="GO:0003924">
    <property type="term" value="F:GTPase activity"/>
    <property type="evidence" value="ECO:0000314"/>
    <property type="project" value="UniProtKB"/>
</dbReference>
<dbReference type="GO" id="GO:0019901">
    <property type="term" value="F:protein kinase binding"/>
    <property type="evidence" value="ECO:0000318"/>
    <property type="project" value="GO_Central"/>
</dbReference>
<dbReference type="GO" id="GO:0030036">
    <property type="term" value="P:actin cytoskeleton organization"/>
    <property type="evidence" value="ECO:0000314"/>
    <property type="project" value="UniProtKB"/>
</dbReference>
<dbReference type="GO" id="GO:0007015">
    <property type="term" value="P:actin filament organization"/>
    <property type="evidence" value="ECO:0000318"/>
    <property type="project" value="GO_Central"/>
</dbReference>
<dbReference type="GO" id="GO:0060326">
    <property type="term" value="P:cell chemotaxis"/>
    <property type="evidence" value="ECO:0000318"/>
    <property type="project" value="GO_Central"/>
</dbReference>
<dbReference type="GO" id="GO:0030031">
    <property type="term" value="P:cell projection assembly"/>
    <property type="evidence" value="ECO:0000314"/>
    <property type="project" value="UniProtKB"/>
</dbReference>
<dbReference type="GO" id="GO:0021894">
    <property type="term" value="P:cerebral cortex GABAergic interneuron development"/>
    <property type="evidence" value="ECO:0007669"/>
    <property type="project" value="Ensembl"/>
</dbReference>
<dbReference type="GO" id="GO:0030865">
    <property type="term" value="P:cortical cytoskeleton organization"/>
    <property type="evidence" value="ECO:0000318"/>
    <property type="project" value="GO_Central"/>
</dbReference>
<dbReference type="GO" id="GO:0007163">
    <property type="term" value="P:establishment or maintenance of cell polarity"/>
    <property type="evidence" value="ECO:0000318"/>
    <property type="project" value="GO_Central"/>
</dbReference>
<dbReference type="GO" id="GO:0048873">
    <property type="term" value="P:homeostasis of number of cells within a tissue"/>
    <property type="evidence" value="ECO:0007669"/>
    <property type="project" value="Ensembl"/>
</dbReference>
<dbReference type="GO" id="GO:0035556">
    <property type="term" value="P:intracellular signal transduction"/>
    <property type="evidence" value="ECO:0000304"/>
    <property type="project" value="UniProtKB"/>
</dbReference>
<dbReference type="GO" id="GO:0008045">
    <property type="term" value="P:motor neuron axon guidance"/>
    <property type="evidence" value="ECO:0000318"/>
    <property type="project" value="GO_Central"/>
</dbReference>
<dbReference type="GO" id="GO:0050885">
    <property type="term" value="P:neuromuscular process controlling balance"/>
    <property type="evidence" value="ECO:0007669"/>
    <property type="project" value="Ensembl"/>
</dbReference>
<dbReference type="GO" id="GO:0033630">
    <property type="term" value="P:positive regulation of cell adhesion mediated by integrin"/>
    <property type="evidence" value="ECO:0000314"/>
    <property type="project" value="UniProtKB"/>
</dbReference>
<dbReference type="GO" id="GO:1900026">
    <property type="term" value="P:positive regulation of substrate adhesion-dependent cell spreading"/>
    <property type="evidence" value="ECO:0000314"/>
    <property type="project" value="UniProtKB"/>
</dbReference>
<dbReference type="GO" id="GO:0098974">
    <property type="term" value="P:postsynaptic actin cytoskeleton organization"/>
    <property type="evidence" value="ECO:0000314"/>
    <property type="project" value="SynGO"/>
</dbReference>
<dbReference type="GO" id="GO:0016601">
    <property type="term" value="P:Rac protein signal transduction"/>
    <property type="evidence" value="ECO:0000318"/>
    <property type="project" value="GO_Central"/>
</dbReference>
<dbReference type="GO" id="GO:0032956">
    <property type="term" value="P:regulation of actin cytoskeleton organization"/>
    <property type="evidence" value="ECO:0000318"/>
    <property type="project" value="GO_Central"/>
</dbReference>
<dbReference type="GO" id="GO:0008360">
    <property type="term" value="P:regulation of cell shape"/>
    <property type="evidence" value="ECO:0000318"/>
    <property type="project" value="GO_Central"/>
</dbReference>
<dbReference type="GO" id="GO:0014041">
    <property type="term" value="P:regulation of neuron maturation"/>
    <property type="evidence" value="ECO:0007669"/>
    <property type="project" value="Ensembl"/>
</dbReference>
<dbReference type="GO" id="GO:1902622">
    <property type="term" value="P:regulation of neutrophil migration"/>
    <property type="evidence" value="ECO:0000318"/>
    <property type="project" value="GO_Central"/>
</dbReference>
<dbReference type="GO" id="GO:0150052">
    <property type="term" value="P:regulation of postsynapse assembly"/>
    <property type="evidence" value="ECO:0007669"/>
    <property type="project" value="Ensembl"/>
</dbReference>
<dbReference type="GO" id="GO:0045730">
    <property type="term" value="P:respiratory burst"/>
    <property type="evidence" value="ECO:0000303"/>
    <property type="project" value="ComplexPortal"/>
</dbReference>
<dbReference type="GO" id="GO:0051932">
    <property type="term" value="P:synaptic transmission, GABAergic"/>
    <property type="evidence" value="ECO:0007669"/>
    <property type="project" value="Ensembl"/>
</dbReference>
<dbReference type="GO" id="GO:0016055">
    <property type="term" value="P:Wnt signaling pathway"/>
    <property type="evidence" value="ECO:0000315"/>
    <property type="project" value="UniProtKB"/>
</dbReference>
<dbReference type="CDD" id="cd01871">
    <property type="entry name" value="Rac1_like"/>
    <property type="match status" value="1"/>
</dbReference>
<dbReference type="FunFam" id="3.40.50.300:FF:000088">
    <property type="entry name" value="Ras-related C3 botulinum toxin substrate 1"/>
    <property type="match status" value="1"/>
</dbReference>
<dbReference type="Gene3D" id="3.40.50.300">
    <property type="entry name" value="P-loop containing nucleotide triphosphate hydrolases"/>
    <property type="match status" value="1"/>
</dbReference>
<dbReference type="InterPro" id="IPR027417">
    <property type="entry name" value="P-loop_NTPase"/>
</dbReference>
<dbReference type="InterPro" id="IPR005225">
    <property type="entry name" value="Small_GTP-bd"/>
</dbReference>
<dbReference type="InterPro" id="IPR001806">
    <property type="entry name" value="Small_GTPase"/>
</dbReference>
<dbReference type="InterPro" id="IPR003578">
    <property type="entry name" value="Small_GTPase_Rho"/>
</dbReference>
<dbReference type="NCBIfam" id="TIGR00231">
    <property type="entry name" value="small_GTP"/>
    <property type="match status" value="1"/>
</dbReference>
<dbReference type="PANTHER" id="PTHR24072">
    <property type="entry name" value="RHO FAMILY GTPASE"/>
    <property type="match status" value="1"/>
</dbReference>
<dbReference type="Pfam" id="PF00071">
    <property type="entry name" value="Ras"/>
    <property type="match status" value="1"/>
</dbReference>
<dbReference type="PRINTS" id="PR00449">
    <property type="entry name" value="RASTRNSFRMNG"/>
</dbReference>
<dbReference type="SMART" id="SM00175">
    <property type="entry name" value="RAB"/>
    <property type="match status" value="1"/>
</dbReference>
<dbReference type="SMART" id="SM00173">
    <property type="entry name" value="RAS"/>
    <property type="match status" value="1"/>
</dbReference>
<dbReference type="SMART" id="SM00174">
    <property type="entry name" value="RHO"/>
    <property type="match status" value="1"/>
</dbReference>
<dbReference type="SUPFAM" id="SSF52540">
    <property type="entry name" value="P-loop containing nucleoside triphosphate hydrolases"/>
    <property type="match status" value="1"/>
</dbReference>
<dbReference type="PROSITE" id="PS51420">
    <property type="entry name" value="RHO"/>
    <property type="match status" value="1"/>
</dbReference>
<comment type="function">
    <text evidence="3 4">Plasma membrane-associated small GTPase which cycles between an active GTP-bound and inactive GDP-bound state. In active state binds to a variety of effector proteins to regulate cellular responses, such as cell spreading and the formation of actin-based protusions including lamellipodia and membrane ruffles. Promotes cell adhesion and spreading on fibrinogen in a CIB1 and alpha-IIb/beta3 integrin-mediated manner.</text>
</comment>
<comment type="catalytic activity">
    <reaction evidence="5">
        <text>GTP + H2O = GDP + phosphate + H(+)</text>
        <dbReference type="Rhea" id="RHEA:19669"/>
        <dbReference type="ChEBI" id="CHEBI:15377"/>
        <dbReference type="ChEBI" id="CHEBI:15378"/>
        <dbReference type="ChEBI" id="CHEBI:37565"/>
        <dbReference type="ChEBI" id="CHEBI:43474"/>
        <dbReference type="ChEBI" id="CHEBI:58189"/>
        <dbReference type="EC" id="3.6.5.2"/>
    </reaction>
    <physiologicalReaction direction="left-to-right" evidence="11">
        <dbReference type="Rhea" id="RHEA:19670"/>
    </physiologicalReaction>
</comment>
<comment type="activity regulation">
    <text evidence="5">Regulated by guanine nucleotide exchange factors (GEFs) which promote the exchange of bound GDP for free GTP, GTPase activating proteins (GAPs) which increase the GTP hydrolysis activity, and GDP dissociation inhibitors which inhibit the dissociation of the nucleotide from the GTPase. Regulated by the GEF protein DOCK7.</text>
</comment>
<comment type="subunit">
    <text evidence="3 4 5 10">Interacts with the GEF protein DOCK7, which promotes the exchange between GDP and GTP, and therefore activates it (PubMed:16982419). Interacts with C1D (PubMed:9852280). Interacts (via C-terminal region) with CIB1; the interaction induces their association with the cytoskeleton upon alpha-IIb/beta3 integrin-mediated adhesion (PubMed:11756406). Interacts with NRBP (PubMed:11956649).</text>
</comment>
<comment type="interaction">
    <interactant intactId="EBI-767084">
        <id>P60763</id>
    </interactant>
    <interactant intactId="EBI-638194">
        <id>P53365</id>
        <label>ARFIP2</label>
    </interactant>
    <organismsDiffer>false</organismsDiffer>
    <experiments>3</experiments>
</comment>
<comment type="interaction">
    <interactant intactId="EBI-767084">
        <id>P60763</id>
    </interactant>
    <interactant intactId="EBI-78473">
        <id>P03372</id>
        <label>ESR1</label>
    </interactant>
    <organismsDiffer>false</organismsDiffer>
    <experiments>5</experiments>
</comment>
<comment type="interaction">
    <interactant intactId="EBI-767084">
        <id>P60763</id>
    </interactant>
    <interactant intactId="EBI-12094670">
        <id>Q8WUI4-6</id>
        <label>HDAC7</label>
    </interactant>
    <organismsDiffer>false</organismsDiffer>
    <experiments>3</experiments>
</comment>
<comment type="interaction">
    <interactant intactId="EBI-767084">
        <id>P60763</id>
    </interactant>
    <interactant intactId="EBI-749731">
        <id>Q9UHY1</id>
        <label>NRBP1</label>
    </interactant>
    <organismsDiffer>false</organismsDiffer>
    <experiments>3</experiments>
</comment>
<comment type="interaction">
    <interactant intactId="EBI-767084">
        <id>P60763</id>
    </interactant>
    <interactant intactId="EBI-295391">
        <id>Q9BYG5</id>
        <label>PARD6B</label>
    </interactant>
    <organismsDiffer>false</organismsDiffer>
    <experiments>3</experiments>
</comment>
<comment type="subcellular location">
    <subcellularLocation>
        <location>Cytoplasm</location>
    </subcellularLocation>
    <subcellularLocation>
        <location>Endomembrane system</location>
    </subcellularLocation>
    <subcellularLocation>
        <location>Cell projection</location>
        <location>Lamellipodium</location>
    </subcellularLocation>
    <subcellularLocation>
        <location>Cytoplasm</location>
        <location>Perinuclear region</location>
    </subcellularLocation>
    <subcellularLocation>
        <location>Cell membrane</location>
    </subcellularLocation>
    <subcellularLocation>
        <location>Cytoplasm</location>
        <location>Cytoskeleton</location>
    </subcellularLocation>
    <text>Membrane-associated when activated. Colocalizes with NRBP to endomembranes and at the cell periphery in lamellipodia. Colocalized with CIB1 in the perinuclear area and at the cell periphery.</text>
</comment>
<comment type="tissue specificity">
    <text>Highest levels in brain, also detected in heart, placenta and pancreas.</text>
</comment>
<comment type="induction">
    <text>Expression down-regulated in quiescent fibroblasts and clearly induced by serum stimulation.</text>
</comment>
<comment type="PTM">
    <text evidence="6">(Microbial infection) Glycosylated at Tyr-32 by Photorhabdus asymbiotica toxin PAU_02230. Mono-O-GlcNAcylation by PAU_02230 inhibits downstream signaling by an impaired interaction with diverse regulator and effector proteins of Rac and leads to actin disassembly.</text>
</comment>
<comment type="PTM">
    <text evidence="7">Ubiquitinated at Lys-166 in a FBXL19-mediated manner; leading to proteasomal degradation.</text>
</comment>
<comment type="disease" evidence="8 9">
    <disease id="DI-05658">
        <name>Neurodevelopmental disorder with structural brain anomalies and dysmorphic facies</name>
        <acronym>NEDBAF</acronym>
        <description>An autosomal dominant neurodevelopmental disorder characterized by global developmental delay, severe intellectual disability, poor language, seizures, dysmorphic features, and thin corpus callosum.</description>
        <dbReference type="MIM" id="618577"/>
    </disease>
    <text>The disease is caused by variants affecting the gene represented in this entry.</text>
</comment>
<comment type="similarity">
    <text evidence="11">Belongs to the small GTPase superfamily. Rho family.</text>
</comment>
<comment type="online information" name="Atlas of Genetics and Cytogenetics in Oncology and Haematology">
    <link uri="https://atlasgeneticsoncology.org/gene/42022/RAC3"/>
</comment>
<keyword id="KW-0002">3D-structure</keyword>
<keyword id="KW-1003">Cell membrane</keyword>
<keyword id="KW-0966">Cell projection</keyword>
<keyword id="KW-0963">Cytoplasm</keyword>
<keyword id="KW-0206">Cytoskeleton</keyword>
<keyword id="KW-0225">Disease variant</keyword>
<keyword id="KW-0325">Glycoprotein</keyword>
<keyword id="KW-0342">GTP-binding</keyword>
<keyword id="KW-0378">Hydrolase</keyword>
<keyword id="KW-0991">Intellectual disability</keyword>
<keyword id="KW-1017">Isopeptide bond</keyword>
<keyword id="KW-0449">Lipoprotein</keyword>
<keyword id="KW-0472">Membrane</keyword>
<keyword id="KW-0488">Methylation</keyword>
<keyword id="KW-0547">Nucleotide-binding</keyword>
<keyword id="KW-0636">Prenylation</keyword>
<keyword id="KW-1267">Proteomics identification</keyword>
<keyword id="KW-1185">Reference proteome</keyword>
<keyword id="KW-0832">Ubl conjugation</keyword>
<accession>P60763</accession>
<accession>O14658</accession>
<accession>Q5U0M8</accession>
<organism>
    <name type="scientific">Homo sapiens</name>
    <name type="common">Human</name>
    <dbReference type="NCBI Taxonomy" id="9606"/>
    <lineage>
        <taxon>Eukaryota</taxon>
        <taxon>Metazoa</taxon>
        <taxon>Chordata</taxon>
        <taxon>Craniata</taxon>
        <taxon>Vertebrata</taxon>
        <taxon>Euteleostomi</taxon>
        <taxon>Mammalia</taxon>
        <taxon>Eutheria</taxon>
        <taxon>Euarchontoglires</taxon>
        <taxon>Primates</taxon>
        <taxon>Haplorrhini</taxon>
        <taxon>Catarrhini</taxon>
        <taxon>Hominidae</taxon>
        <taxon>Homo</taxon>
    </lineage>
</organism>
<proteinExistence type="evidence at protein level"/>